<protein>
    <recommendedName>
        <fullName evidence="1">UPF0756 membrane protein BBR47_32760</fullName>
    </recommendedName>
</protein>
<name>Y3276_BREBN</name>
<keyword id="KW-1003">Cell membrane</keyword>
<keyword id="KW-0472">Membrane</keyword>
<keyword id="KW-1185">Reference proteome</keyword>
<keyword id="KW-0812">Transmembrane</keyword>
<keyword id="KW-1133">Transmembrane helix</keyword>
<comment type="subcellular location">
    <subcellularLocation>
        <location evidence="1">Cell membrane</location>
        <topology evidence="1">Multi-pass membrane protein</topology>
    </subcellularLocation>
</comment>
<comment type="similarity">
    <text evidence="1">Belongs to the UPF0756 family.</text>
</comment>
<gene>
    <name type="ordered locus">BBR47_32760</name>
</gene>
<feature type="chain" id="PRO_0000388838" description="UPF0756 membrane protein BBR47_32760">
    <location>
        <begin position="1"/>
        <end position="149"/>
    </location>
</feature>
<feature type="transmembrane region" description="Helical" evidence="1">
    <location>
        <begin position="3"/>
        <end position="23"/>
    </location>
</feature>
<feature type="transmembrane region" description="Helical" evidence="1">
    <location>
        <begin position="48"/>
        <end position="68"/>
    </location>
</feature>
<feature type="transmembrane region" description="Helical" evidence="1">
    <location>
        <begin position="85"/>
        <end position="105"/>
    </location>
</feature>
<feature type="transmembrane region" description="Helical" evidence="1">
    <location>
        <begin position="106"/>
        <end position="126"/>
    </location>
</feature>
<feature type="transmembrane region" description="Helical" evidence="1">
    <location>
        <begin position="128"/>
        <end position="148"/>
    </location>
</feature>
<evidence type="ECO:0000255" key="1">
    <source>
        <dbReference type="HAMAP-Rule" id="MF_01874"/>
    </source>
</evidence>
<organism>
    <name type="scientific">Brevibacillus brevis (strain 47 / JCM 6285 / NBRC 100599)</name>
    <dbReference type="NCBI Taxonomy" id="358681"/>
    <lineage>
        <taxon>Bacteria</taxon>
        <taxon>Bacillati</taxon>
        <taxon>Bacillota</taxon>
        <taxon>Bacilli</taxon>
        <taxon>Bacillales</taxon>
        <taxon>Paenibacillaceae</taxon>
        <taxon>Brevibacillus</taxon>
    </lineage>
</organism>
<dbReference type="EMBL" id="AP008955">
    <property type="protein sequence ID" value="BAH44253.1"/>
    <property type="molecule type" value="Genomic_DNA"/>
</dbReference>
<dbReference type="RefSeq" id="WP_015891566.1">
    <property type="nucleotide sequence ID" value="NC_012491.1"/>
</dbReference>
<dbReference type="STRING" id="358681.BBR47_32760"/>
<dbReference type="KEGG" id="bbe:BBR47_32760"/>
<dbReference type="eggNOG" id="COG2707">
    <property type="taxonomic scope" value="Bacteria"/>
</dbReference>
<dbReference type="HOGENOM" id="CLU_125889_0_0_9"/>
<dbReference type="Proteomes" id="UP000001877">
    <property type="component" value="Chromosome"/>
</dbReference>
<dbReference type="GO" id="GO:0005886">
    <property type="term" value="C:plasma membrane"/>
    <property type="evidence" value="ECO:0007669"/>
    <property type="project" value="UniProtKB-SubCell"/>
</dbReference>
<dbReference type="HAMAP" id="MF_01874">
    <property type="entry name" value="UPF0756"/>
    <property type="match status" value="1"/>
</dbReference>
<dbReference type="InterPro" id="IPR007382">
    <property type="entry name" value="UPF0756_TM"/>
</dbReference>
<dbReference type="PANTHER" id="PTHR38452">
    <property type="entry name" value="UPF0756 MEMBRANE PROTEIN YEAL"/>
    <property type="match status" value="1"/>
</dbReference>
<dbReference type="PANTHER" id="PTHR38452:SF1">
    <property type="entry name" value="UPF0756 MEMBRANE PROTEIN YEAL"/>
    <property type="match status" value="1"/>
</dbReference>
<dbReference type="Pfam" id="PF04284">
    <property type="entry name" value="DUF441"/>
    <property type="match status" value="1"/>
</dbReference>
<reference key="1">
    <citation type="submission" date="2005-03" db="EMBL/GenBank/DDBJ databases">
        <title>Brevibacillus brevis strain 47, complete genome.</title>
        <authorList>
            <person name="Hosoyama A."/>
            <person name="Yamada R."/>
            <person name="Hongo Y."/>
            <person name="Terui Y."/>
            <person name="Ankai A."/>
            <person name="Masuyama W."/>
            <person name="Sekiguchi M."/>
            <person name="Takeda T."/>
            <person name="Asano K."/>
            <person name="Ohji S."/>
            <person name="Ichikawa N."/>
            <person name="Narita S."/>
            <person name="Aoki N."/>
            <person name="Miura H."/>
            <person name="Matsushita S."/>
            <person name="Sekigawa T."/>
            <person name="Yamagata H."/>
            <person name="Yoshikawa H."/>
            <person name="Udaka S."/>
            <person name="Tanikawa S."/>
            <person name="Fujita N."/>
        </authorList>
    </citation>
    <scope>NUCLEOTIDE SEQUENCE [LARGE SCALE GENOMIC DNA]</scope>
    <source>
        <strain>47 / JCM 6285 / NBRC 100599</strain>
    </source>
</reference>
<accession>C0ZEP4</accession>
<proteinExistence type="inferred from homology"/>
<sequence>MDWISIILLVLLALGVIGNNATVSIAVAILLLMRLLSLERYFPLLEQHGLQLGIIILTIGIMTPLASGKINPSSFLEIFTNWHSLLAVAVGMFVAYLAGKGTVLMSQNPLIVTGLLLGTIAGVTFFRGVAVGPLIAAGILAFILQFLPK</sequence>